<protein>
    <recommendedName>
        <fullName evidence="1">Ribonuclease Z</fullName>
        <shortName evidence="1">RNase Z</shortName>
        <ecNumber evidence="1">3.1.26.11</ecNumber>
    </recommendedName>
    <alternativeName>
        <fullName evidence="1">tRNA 3 endonuclease</fullName>
    </alternativeName>
    <alternativeName>
        <fullName evidence="1">tRNase Z</fullName>
    </alternativeName>
</protein>
<proteinExistence type="inferred from homology"/>
<evidence type="ECO:0000255" key="1">
    <source>
        <dbReference type="HAMAP-Rule" id="MF_01818"/>
    </source>
</evidence>
<dbReference type="EC" id="3.1.26.11" evidence="1"/>
<dbReference type="EMBL" id="BA000019">
    <property type="protein sequence ID" value="BAB76851.1"/>
    <property type="molecule type" value="Genomic_DNA"/>
</dbReference>
<dbReference type="PIR" id="AH2449">
    <property type="entry name" value="AH2449"/>
</dbReference>
<dbReference type="RefSeq" id="WP_010999278.1">
    <property type="nucleotide sequence ID" value="NZ_RSCN01000052.1"/>
</dbReference>
<dbReference type="SMR" id="Q8YLZ0"/>
<dbReference type="STRING" id="103690.gene:10497211"/>
<dbReference type="KEGG" id="ana:alr5152"/>
<dbReference type="eggNOG" id="COG1234">
    <property type="taxonomic scope" value="Bacteria"/>
</dbReference>
<dbReference type="OrthoDB" id="9800940at2"/>
<dbReference type="Proteomes" id="UP000002483">
    <property type="component" value="Chromosome"/>
</dbReference>
<dbReference type="GO" id="GO:0042781">
    <property type="term" value="F:3'-tRNA processing endoribonuclease activity"/>
    <property type="evidence" value="ECO:0007669"/>
    <property type="project" value="UniProtKB-UniRule"/>
</dbReference>
<dbReference type="GO" id="GO:0008270">
    <property type="term" value="F:zinc ion binding"/>
    <property type="evidence" value="ECO:0007669"/>
    <property type="project" value="UniProtKB-UniRule"/>
</dbReference>
<dbReference type="CDD" id="cd07717">
    <property type="entry name" value="RNaseZ_ZiPD-like_MBL-fold"/>
    <property type="match status" value="1"/>
</dbReference>
<dbReference type="FunFam" id="3.60.15.10:FF:000002">
    <property type="entry name" value="Ribonuclease Z"/>
    <property type="match status" value="1"/>
</dbReference>
<dbReference type="Gene3D" id="3.60.15.10">
    <property type="entry name" value="Ribonuclease Z/Hydroxyacylglutathione hydrolase-like"/>
    <property type="match status" value="1"/>
</dbReference>
<dbReference type="HAMAP" id="MF_01818">
    <property type="entry name" value="RNase_Z_BN"/>
    <property type="match status" value="1"/>
</dbReference>
<dbReference type="InterPro" id="IPR001279">
    <property type="entry name" value="Metallo-B-lactamas"/>
</dbReference>
<dbReference type="InterPro" id="IPR036866">
    <property type="entry name" value="RibonucZ/Hydroxyglut_hydro"/>
</dbReference>
<dbReference type="InterPro" id="IPR013471">
    <property type="entry name" value="RNase_Z/BN"/>
</dbReference>
<dbReference type="NCBIfam" id="NF000801">
    <property type="entry name" value="PRK00055.1-3"/>
    <property type="match status" value="1"/>
</dbReference>
<dbReference type="NCBIfam" id="TIGR02651">
    <property type="entry name" value="RNase_Z"/>
    <property type="match status" value="1"/>
</dbReference>
<dbReference type="PANTHER" id="PTHR46018">
    <property type="entry name" value="ZINC PHOSPHODIESTERASE ELAC PROTEIN 1"/>
    <property type="match status" value="1"/>
</dbReference>
<dbReference type="PANTHER" id="PTHR46018:SF2">
    <property type="entry name" value="ZINC PHOSPHODIESTERASE ELAC PROTEIN 1"/>
    <property type="match status" value="1"/>
</dbReference>
<dbReference type="Pfam" id="PF00753">
    <property type="entry name" value="Lactamase_B"/>
    <property type="match status" value="1"/>
</dbReference>
<dbReference type="Pfam" id="PF12706">
    <property type="entry name" value="Lactamase_B_2"/>
    <property type="match status" value="1"/>
</dbReference>
<dbReference type="SUPFAM" id="SSF56281">
    <property type="entry name" value="Metallo-hydrolase/oxidoreductase"/>
    <property type="match status" value="1"/>
</dbReference>
<accession>Q8YLZ0</accession>
<sequence>MQITFLGTSSGVPTRARNVSSVALRLPQRAELWLFDCGEGTQHQILRSDLKVSQLSRIFITHLHGDHIFGLMGLLASCGLAGNVQRVDIYGPSGLNDYIQSASRYSHTHFSYPIKVHTVRPGVIYENDEFTVTCGLLHHRITAFGYRVAEKDRAGRFDIEKAKELQIPPGRIYGQLKRGETVTLEDGRVINGAELCGPTEIGRKMAYCTDTIYCDGAVELAQDADVLIHEATFAHQDSEMAFQRLHSTTTMAAQTALAAGVRRLLMTHFSPRYAPGNTIELKDLLQEARAIFPRTDMAYDFMTYEVPRRREPVFSSVSSSSV</sequence>
<name>RNZ_NOSS1</name>
<gene>
    <name evidence="1" type="primary">rnz</name>
    <name type="ordered locus">alr5152</name>
</gene>
<keyword id="KW-0255">Endonuclease</keyword>
<keyword id="KW-0378">Hydrolase</keyword>
<keyword id="KW-0479">Metal-binding</keyword>
<keyword id="KW-0540">Nuclease</keyword>
<keyword id="KW-1185">Reference proteome</keyword>
<keyword id="KW-0819">tRNA processing</keyword>
<keyword id="KW-0862">Zinc</keyword>
<organism>
    <name type="scientific">Nostoc sp. (strain PCC 7120 / SAG 25.82 / UTEX 2576)</name>
    <dbReference type="NCBI Taxonomy" id="103690"/>
    <lineage>
        <taxon>Bacteria</taxon>
        <taxon>Bacillati</taxon>
        <taxon>Cyanobacteriota</taxon>
        <taxon>Cyanophyceae</taxon>
        <taxon>Nostocales</taxon>
        <taxon>Nostocaceae</taxon>
        <taxon>Nostoc</taxon>
    </lineage>
</organism>
<comment type="function">
    <text evidence="1">Zinc phosphodiesterase, which displays some tRNA 3'-processing endonuclease activity. Probably involved in tRNA maturation, by removing a 3'-trailer from precursor tRNA.</text>
</comment>
<comment type="catalytic activity">
    <reaction evidence="1">
        <text>Endonucleolytic cleavage of RNA, removing extra 3' nucleotides from tRNA precursor, generating 3' termini of tRNAs. A 3'-hydroxy group is left at the tRNA terminus and a 5'-phosphoryl group is left at the trailer molecule.</text>
        <dbReference type="EC" id="3.1.26.11"/>
    </reaction>
</comment>
<comment type="cofactor">
    <cofactor evidence="1">
        <name>Zn(2+)</name>
        <dbReference type="ChEBI" id="CHEBI:29105"/>
    </cofactor>
    <text evidence="1">Binds 2 Zn(2+) ions.</text>
</comment>
<comment type="subunit">
    <text evidence="1">Homodimer.</text>
</comment>
<comment type="similarity">
    <text evidence="1">Belongs to the RNase Z family.</text>
</comment>
<reference key="1">
    <citation type="journal article" date="2001" name="DNA Res.">
        <title>Complete genomic sequence of the filamentous nitrogen-fixing cyanobacterium Anabaena sp. strain PCC 7120.</title>
        <authorList>
            <person name="Kaneko T."/>
            <person name="Nakamura Y."/>
            <person name="Wolk C.P."/>
            <person name="Kuritz T."/>
            <person name="Sasamoto S."/>
            <person name="Watanabe A."/>
            <person name="Iriguchi M."/>
            <person name="Ishikawa A."/>
            <person name="Kawashima K."/>
            <person name="Kimura T."/>
            <person name="Kishida Y."/>
            <person name="Kohara M."/>
            <person name="Matsumoto M."/>
            <person name="Matsuno A."/>
            <person name="Muraki A."/>
            <person name="Nakazaki N."/>
            <person name="Shimpo S."/>
            <person name="Sugimoto M."/>
            <person name="Takazawa M."/>
            <person name="Yamada M."/>
            <person name="Yasuda M."/>
            <person name="Tabata S."/>
        </authorList>
    </citation>
    <scope>NUCLEOTIDE SEQUENCE [LARGE SCALE GENOMIC DNA]</scope>
    <source>
        <strain>PCC 7120 / SAG 25.82 / UTEX 2576</strain>
    </source>
</reference>
<feature type="chain" id="PRO_0000155838" description="Ribonuclease Z">
    <location>
        <begin position="1"/>
        <end position="322"/>
    </location>
</feature>
<feature type="active site" description="Proton acceptor" evidence="1">
    <location>
        <position position="66"/>
    </location>
</feature>
<feature type="binding site" evidence="1">
    <location>
        <position position="62"/>
    </location>
    <ligand>
        <name>Zn(2+)</name>
        <dbReference type="ChEBI" id="CHEBI:29105"/>
        <label>1</label>
        <note>catalytic</note>
    </ligand>
</feature>
<feature type="binding site" evidence="1">
    <location>
        <position position="64"/>
    </location>
    <ligand>
        <name>Zn(2+)</name>
        <dbReference type="ChEBI" id="CHEBI:29105"/>
        <label>1</label>
        <note>catalytic</note>
    </ligand>
</feature>
<feature type="binding site" evidence="1">
    <location>
        <position position="66"/>
    </location>
    <ligand>
        <name>Zn(2+)</name>
        <dbReference type="ChEBI" id="CHEBI:29105"/>
        <label>2</label>
        <note>catalytic</note>
    </ligand>
</feature>
<feature type="binding site" evidence="1">
    <location>
        <position position="67"/>
    </location>
    <ligand>
        <name>Zn(2+)</name>
        <dbReference type="ChEBI" id="CHEBI:29105"/>
        <label>2</label>
        <note>catalytic</note>
    </ligand>
</feature>
<feature type="binding site" evidence="1">
    <location>
        <position position="139"/>
    </location>
    <ligand>
        <name>Zn(2+)</name>
        <dbReference type="ChEBI" id="CHEBI:29105"/>
        <label>1</label>
        <note>catalytic</note>
    </ligand>
</feature>
<feature type="binding site" evidence="1">
    <location>
        <position position="210"/>
    </location>
    <ligand>
        <name>Zn(2+)</name>
        <dbReference type="ChEBI" id="CHEBI:29105"/>
        <label>1</label>
        <note>catalytic</note>
    </ligand>
</feature>
<feature type="binding site" evidence="1">
    <location>
        <position position="210"/>
    </location>
    <ligand>
        <name>Zn(2+)</name>
        <dbReference type="ChEBI" id="CHEBI:29105"/>
        <label>2</label>
        <note>catalytic</note>
    </ligand>
</feature>
<feature type="binding site" evidence="1">
    <location>
        <position position="268"/>
    </location>
    <ligand>
        <name>Zn(2+)</name>
        <dbReference type="ChEBI" id="CHEBI:29105"/>
        <label>2</label>
        <note>catalytic</note>
    </ligand>
</feature>